<dbReference type="EC" id="1.17.4.1" evidence="1"/>
<dbReference type="EMBL" id="AY372243">
    <property type="protein sequence ID" value="AAQ73718.1"/>
    <property type="molecule type" value="Genomic_DNA"/>
</dbReference>
<dbReference type="RefSeq" id="NP_944412.1">
    <property type="nucleotide sequence ID" value="NC_005264.1"/>
</dbReference>
<dbReference type="SMR" id="Q6UDJ2"/>
<dbReference type="GeneID" id="2656977"/>
<dbReference type="KEGG" id="vg:2656977"/>
<dbReference type="Proteomes" id="UP000006840">
    <property type="component" value="Segment"/>
</dbReference>
<dbReference type="GO" id="GO:0005524">
    <property type="term" value="F:ATP binding"/>
    <property type="evidence" value="ECO:0007669"/>
    <property type="project" value="UniProtKB-UniRule"/>
</dbReference>
<dbReference type="GO" id="GO:0004748">
    <property type="term" value="F:ribonucleoside-diphosphate reductase activity, thioredoxin disulfide as acceptor"/>
    <property type="evidence" value="ECO:0007669"/>
    <property type="project" value="UniProtKB-UniRule"/>
</dbReference>
<dbReference type="GO" id="GO:0009263">
    <property type="term" value="P:deoxyribonucleotide biosynthetic process"/>
    <property type="evidence" value="ECO:0007669"/>
    <property type="project" value="InterPro"/>
</dbReference>
<dbReference type="GO" id="GO:0006260">
    <property type="term" value="P:DNA replication"/>
    <property type="evidence" value="ECO:0007669"/>
    <property type="project" value="UniProtKB-KW"/>
</dbReference>
<dbReference type="GO" id="GO:0019046">
    <property type="term" value="P:release from viral latency"/>
    <property type="evidence" value="ECO:0007669"/>
    <property type="project" value="UniProtKB-KW"/>
</dbReference>
<dbReference type="Gene3D" id="3.20.70.20">
    <property type="match status" value="1"/>
</dbReference>
<dbReference type="HAMAP" id="MF_04026">
    <property type="entry name" value="HSV_RIR1"/>
    <property type="match status" value="1"/>
</dbReference>
<dbReference type="InterPro" id="IPR034717">
    <property type="entry name" value="HSV_RIR1"/>
</dbReference>
<dbReference type="InterPro" id="IPR013346">
    <property type="entry name" value="NrdE_NrdA_C"/>
</dbReference>
<dbReference type="InterPro" id="IPR000788">
    <property type="entry name" value="RNR_lg_C"/>
</dbReference>
<dbReference type="InterPro" id="IPR013509">
    <property type="entry name" value="RNR_lsu_N"/>
</dbReference>
<dbReference type="InterPro" id="IPR039718">
    <property type="entry name" value="Rrm1"/>
</dbReference>
<dbReference type="NCBIfam" id="TIGR02506">
    <property type="entry name" value="NrdE_NrdA"/>
    <property type="match status" value="1"/>
</dbReference>
<dbReference type="PANTHER" id="PTHR11573">
    <property type="entry name" value="RIBONUCLEOSIDE-DIPHOSPHATE REDUCTASE LARGE CHAIN"/>
    <property type="match status" value="1"/>
</dbReference>
<dbReference type="PANTHER" id="PTHR11573:SF6">
    <property type="entry name" value="RIBONUCLEOSIDE-DIPHOSPHATE REDUCTASE LARGE SUBUNIT"/>
    <property type="match status" value="1"/>
</dbReference>
<dbReference type="Pfam" id="PF02867">
    <property type="entry name" value="Ribonuc_red_lgC"/>
    <property type="match status" value="1"/>
</dbReference>
<dbReference type="Pfam" id="PF00317">
    <property type="entry name" value="Ribonuc_red_lgN"/>
    <property type="match status" value="1"/>
</dbReference>
<dbReference type="PRINTS" id="PR01183">
    <property type="entry name" value="RIBORDTASEM1"/>
</dbReference>
<dbReference type="SUPFAM" id="SSF51998">
    <property type="entry name" value="PFL-like glycyl radical enzymes"/>
    <property type="match status" value="1"/>
</dbReference>
<dbReference type="PROSITE" id="PS00089">
    <property type="entry name" value="RIBORED_LARGE"/>
    <property type="match status" value="1"/>
</dbReference>
<organismHost>
    <name type="scientific">Amazona oratrix</name>
    <name type="common">yellow-headed parrot</name>
    <dbReference type="NCBI Taxonomy" id="152276"/>
</organismHost>
<name>RIR1_PSHV1</name>
<evidence type="ECO:0000255" key="1">
    <source>
        <dbReference type="HAMAP-Rule" id="MF_04026"/>
    </source>
</evidence>
<accession>Q6UDJ2</accession>
<feature type="chain" id="PRO_0000406807" description="Ribonucleoside-diphosphate reductase large subunit">
    <location>
        <begin position="1"/>
        <end position="811"/>
    </location>
</feature>
<feature type="active site" description="Proton acceptor" evidence="1">
    <location>
        <position position="450"/>
    </location>
</feature>
<feature type="active site" description="Cysteine radical intermediate" evidence="1">
    <location>
        <position position="452"/>
    </location>
</feature>
<feature type="active site" description="Proton acceptor" evidence="1">
    <location>
        <position position="454"/>
    </location>
</feature>
<feature type="binding site" evidence="1">
    <location>
        <position position="231"/>
    </location>
    <ligand>
        <name>substrate</name>
    </ligand>
</feature>
<feature type="binding site" evidence="1">
    <location>
        <begin position="246"/>
        <end position="247"/>
    </location>
    <ligand>
        <name>substrate</name>
    </ligand>
</feature>
<feature type="binding site" evidence="1">
    <location>
        <position position="277"/>
    </location>
    <ligand>
        <name>substrate</name>
    </ligand>
</feature>
<feature type="binding site" evidence="1">
    <location>
        <begin position="450"/>
        <end position="454"/>
    </location>
    <ligand>
        <name>substrate</name>
    </ligand>
</feature>
<feature type="binding site" evidence="1">
    <location>
        <begin position="636"/>
        <end position="640"/>
    </location>
    <ligand>
        <name>substrate</name>
    </ligand>
</feature>
<feature type="site" description="Important for hydrogen atom transfer" evidence="1">
    <location>
        <position position="247"/>
    </location>
</feature>
<feature type="site" description="Important for hydrogen atom transfer" evidence="1">
    <location>
        <position position="467"/>
    </location>
</feature>
<feature type="site" description="Important for electron transfer" evidence="1">
    <location>
        <position position="781"/>
    </location>
</feature>
<feature type="site" description="Important for electron transfer" evidence="1">
    <location>
        <position position="782"/>
    </location>
</feature>
<feature type="site" description="Interacts with thioredoxin/glutaredoxin" evidence="1">
    <location>
        <position position="807"/>
    </location>
</feature>
<feature type="site" description="Interacts with thioredoxin/glutaredoxin" evidence="1">
    <location>
        <position position="810"/>
    </location>
</feature>
<feature type="disulfide bond" description="Redox-active" evidence="1">
    <location>
        <begin position="247"/>
        <end position="467"/>
    </location>
</feature>
<organism>
    <name type="scientific">Psittacid herpesvirus 1 (isolate Amazon parrot/-/97-0001/1997)</name>
    <name type="common">PsHV-1</name>
    <name type="synonym">Pacheco's disease virus</name>
    <dbReference type="NCBI Taxonomy" id="670426"/>
    <lineage>
        <taxon>Viruses</taxon>
        <taxon>Duplodnaviria</taxon>
        <taxon>Heunggongvirae</taxon>
        <taxon>Peploviricota</taxon>
        <taxon>Herviviricetes</taxon>
        <taxon>Herpesvirales</taxon>
        <taxon>Orthoherpesviridae</taxon>
        <taxon>Alphaherpesvirinae</taxon>
        <taxon>Iltovirus</taxon>
        <taxon>Iltovirus psittacidalpha1</taxon>
        <taxon>Psittacid alphaherpesvirus 1</taxon>
    </lineage>
</organism>
<gene>
    <name evidence="1" type="primary">RIR1</name>
    <name type="ordered locus">UL39</name>
</gene>
<keyword id="KW-0067">ATP-binding</keyword>
<keyword id="KW-1015">Disulfide bond</keyword>
<keyword id="KW-0235">DNA replication</keyword>
<keyword id="KW-0244">Early protein</keyword>
<keyword id="KW-0945">Host-virus interaction</keyword>
<keyword id="KW-0547">Nucleotide-binding</keyword>
<keyword id="KW-0560">Oxidoreductase</keyword>
<keyword id="KW-1185">Reference proteome</keyword>
<keyword id="KW-1251">Viral latency</keyword>
<keyword id="KW-1272">Viral reactivation from latency</keyword>
<proteinExistence type="inferred from homology"/>
<reference key="1">
    <citation type="journal article" date="2006" name="J. Virol.">
        <title>Psittacid herpesvirus 1 and infectious laryngotracheitis virus: Comparative genome sequence analysis of two avian alphaherpesviruses.</title>
        <authorList>
            <person name="Thureen D.R."/>
            <person name="Keeler C.L. Jr."/>
        </authorList>
    </citation>
    <scope>NUCLEOTIDE SEQUENCE [LARGE SCALE GENOMIC DNA]</scope>
</reference>
<comment type="function">
    <text evidence="1">Ribonucleoside-diphosphate reductase holoenzyme provides the precursors necessary for viral DNA synthesis. Allows virus growth in non-dividing cells, as well as reactivation from latency in infected hosts. Catalyzes the biosynthesis of deoxyribonucleotides from the corresponding ribonucleotides.</text>
</comment>
<comment type="catalytic activity">
    <reaction evidence="1">
        <text>a 2'-deoxyribonucleoside 5'-diphosphate + [thioredoxin]-disulfide + H2O = a ribonucleoside 5'-diphosphate + [thioredoxin]-dithiol</text>
        <dbReference type="Rhea" id="RHEA:23252"/>
        <dbReference type="Rhea" id="RHEA-COMP:10698"/>
        <dbReference type="Rhea" id="RHEA-COMP:10700"/>
        <dbReference type="ChEBI" id="CHEBI:15377"/>
        <dbReference type="ChEBI" id="CHEBI:29950"/>
        <dbReference type="ChEBI" id="CHEBI:50058"/>
        <dbReference type="ChEBI" id="CHEBI:57930"/>
        <dbReference type="ChEBI" id="CHEBI:73316"/>
        <dbReference type="EC" id="1.17.4.1"/>
    </reaction>
</comment>
<comment type="subunit">
    <text evidence="1">Heterotetramer composed of a homodimer of the large subunit (R1) and a homodimer of the small subunit (R2). Larger multisubunit protein complex are also active, composed of (R1)n(R2)n.</text>
</comment>
<comment type="similarity">
    <text evidence="1">Belongs to the ribonucleoside diphosphate reductase large chain family.</text>
</comment>
<sequence>MSSATSLVPPAAPDMREHELGECAAFYAAETPQRLFENLLHLENALKARGYDTDSAGAPALGPTTLTMEAIADRITLIINRFKAAVRLDLELYRLLAELVHIRIRTKTVSMQAWIELRGLSRECAEFILERKNFVCELMERFGEVYPTLSRVGLQSARKFESMYLGKLKNGRLESVGQFFLRIAAEAARGVANNDAFAAAVFRDGTRAPDANTVFCLFFMALCRQEIVPPTPVMLFAGTESRSYASCFLLDVRGRHTRDVLTSIAEEIIPVMHSHGGIGLYMDCDSNWDDNSSGMMLALKALDSIIAASNAVSARPSGLCVYVEPWHRDIMKILRCRGVLAGNEETRCDNTFFALWMPDLFMKRFEANGTWTLFDGRAAHLSDLYGEEFEKEYELLERKNVGIATYPARDVMFALIKSAVSTGTPFVMFKHAVNRNYFFDMAGRAMKCSNLCTEIVHMTDDESVGVCNLTSLNLAAFVTRRNALPGTPPIGTFDYSSFRDACAVATVFINALMSLSNLPIKRATTGNERLRSIGIGVQGFHTACLLQGFGLDSVEACRFNGKLFEALALTTFQTSCRICELGMNPFRGFSESKYAKGWLHMDGWPARHLYFDGWDRLRENIKAYGLYNCQLVALMPTASSSQLTEVSEGIHPVFGNIFSKITTTGEDIQLNVALMETIECLYPNKAERRDILERLHKNKWSTRGAFGAALPSQHPLTKFDTAFEADQEHLLRLSADRAPFVDHSQSTTLYVVEEDDGAVRASRVAHLLTTAFKYGLKTGMYYCKVRKATDNGVFLGTDTCRRDDPTCLACQ</sequence>
<protein>
    <recommendedName>
        <fullName evidence="1">Ribonucleoside-diphosphate reductase large subunit</fullName>
        <shortName evidence="1">R1</shortName>
        <ecNumber evidence="1">1.17.4.1</ecNumber>
    </recommendedName>
    <alternativeName>
        <fullName evidence="1">Ribonucleotide reductase large subunit</fullName>
    </alternativeName>
</protein>